<sequence length="206" mass="24712">MRKILFFGLLSICFLFVFFFYKQKENKIIYNKIVEKFEDNVVIDETYTHLFKDSNLKELVFIKSRLIIPELEHKKMMKATGYRADAYRALSTVYKFDFKVHDNKILGFKSVIFEGFEDAKVSKHENNLPSEKWQQLKDFNIGDPNINEKFFHLEFPFVVKNTLCVTISKGFFKKIKKLKRLKIMLISNEDREYKIDIENFLPKYNL</sequence>
<dbReference type="EMBL" id="AY894349">
    <property type="protein sequence ID" value="AAX69076.1"/>
    <property type="molecule type" value="Genomic_DNA"/>
</dbReference>
<dbReference type="EMBL" id="CP002757">
    <property type="protein sequence ID" value="AEL19445.1"/>
    <property type="molecule type" value="Genomic_DNA"/>
</dbReference>
<dbReference type="RefSeq" id="WP_014024058.1">
    <property type="nucleotide sequence ID" value="NC_015922.1"/>
</dbReference>
<dbReference type="KEGG" id="bbs:BbiDN127_E0008"/>
<dbReference type="HOGENOM" id="CLU_1329815_0_0_12"/>
<dbReference type="Proteomes" id="UP000001634">
    <property type="component" value="Plasmid lp25"/>
</dbReference>
<dbReference type="GO" id="GO:0009279">
    <property type="term" value="C:cell outer membrane"/>
    <property type="evidence" value="ECO:0007669"/>
    <property type="project" value="UniProtKB-SubCell"/>
</dbReference>
<dbReference type="InterPro" id="IPR031471">
    <property type="entry name" value="BptA"/>
</dbReference>
<dbReference type="NCBIfam" id="NF045772">
    <property type="entry name" value="VirAssocBptA"/>
    <property type="match status" value="1"/>
</dbReference>
<dbReference type="Pfam" id="PF17044">
    <property type="entry name" value="BPTA"/>
    <property type="match status" value="1"/>
</dbReference>
<reference key="1">
    <citation type="journal article" date="2005" name="Proc. Natl. Acad. Sci. U.S.A.">
        <title>bptA (bbe16) is essential for the persistence of the Lyme disease spirochete, Borrelia burgdorferi, in its natural tick vector.</title>
        <authorList>
            <person name="Revel A.T."/>
            <person name="Blevins J.S."/>
            <person name="Almazan C."/>
            <person name="Neil L."/>
            <person name="Kocan K.M."/>
            <person name="de la Fuente J."/>
            <person name="Hagman K.E."/>
            <person name="Norgard M.V."/>
        </authorList>
    </citation>
    <scope>NUCLEOTIDE SEQUENCE [GENOMIC DNA]</scope>
    <source>
        <strain>DSM 17990 / CIP 109136 / DN127</strain>
    </source>
</reference>
<reference key="2">
    <citation type="submission" date="2011-06" db="EMBL/GenBank/DDBJ databases">
        <title>Complete genome sequence of Borrelia bissettii strain DN127.</title>
        <authorList>
            <person name="Mongodin E.F."/>
            <person name="Casjens S.R."/>
            <person name="Fraser-Liggett C.M."/>
            <person name="Qiu W.-G."/>
            <person name="Dunn J.J."/>
            <person name="Luft B.J."/>
            <person name="Schutzer S.E."/>
        </authorList>
    </citation>
    <scope>NUCLEOTIDE SEQUENCE [LARGE SCALE GENOMIC DNA]</scope>
    <source>
        <strain>DSM 17990 / CIP 109136 / DN127</strain>
        <plasmid>lp25</plasmid>
    </source>
</reference>
<geneLocation type="plasmid">
    <name>lp25</name>
</geneLocation>
<feature type="signal peptide" evidence="2">
    <location>
        <begin position="1"/>
        <end position="19"/>
    </location>
</feature>
<feature type="chain" id="PRO_0000240472" description="Protein BptA">
    <location>
        <begin position="20"/>
        <end position="206"/>
    </location>
</feature>
<feature type="sequence conflict" description="In Ref. 1; AAX69076." evidence="3" ref="1">
    <original>E</original>
    <variation>K</variation>
    <location>
        <position position="192"/>
    </location>
</feature>
<protein>
    <recommendedName>
        <fullName>Protein BptA</fullName>
    </recommendedName>
    <alternativeName>
        <fullName>Borrelial persistence in ticks protein A</fullName>
    </alternativeName>
</protein>
<comment type="function">
    <text evidence="1">Virulence-associated protein essential for survival of the bacterium within the tick host and therefore within the natural life cycle of the spirochete.</text>
</comment>
<comment type="subcellular location">
    <subcellularLocation>
        <location evidence="3">Cell outer membrane</location>
    </subcellularLocation>
</comment>
<comment type="similarity">
    <text evidence="3">Belongs to the BptA family.</text>
</comment>
<evidence type="ECO:0000250" key="1"/>
<evidence type="ECO:0000255" key="2"/>
<evidence type="ECO:0000305" key="3"/>
<name>BPTA_BORBD</name>
<gene>
    <name type="primary">bptA</name>
    <name type="ordered locus">BbiDN127_E0008</name>
</gene>
<organism>
    <name type="scientific">Borrelia bissettiae (strain DSM 17990 / CIP 109136 / DN127)</name>
    <name type="common">Borreliella bissettiae</name>
    <dbReference type="NCBI Taxonomy" id="521010"/>
    <lineage>
        <taxon>Bacteria</taxon>
        <taxon>Pseudomonadati</taxon>
        <taxon>Spirochaetota</taxon>
        <taxon>Spirochaetia</taxon>
        <taxon>Spirochaetales</taxon>
        <taxon>Borreliaceae</taxon>
        <taxon>Borreliella</taxon>
    </lineage>
</organism>
<accession>Q56NG9</accession>
<accession>G0AP19</accession>
<keyword id="KW-0998">Cell outer membrane</keyword>
<keyword id="KW-0472">Membrane</keyword>
<keyword id="KW-0614">Plasmid</keyword>
<keyword id="KW-0732">Signal</keyword>
<keyword id="KW-0843">Virulence</keyword>
<proteinExistence type="inferred from homology"/>